<protein>
    <recommendedName>
        <fullName>Imidazole glycerol phosphate synthase subunit HisH</fullName>
        <ecNumber>4.3.2.10</ecNumber>
    </recommendedName>
    <alternativeName>
        <fullName>IGP synthase glutaminase subunit</fullName>
        <ecNumber>3.5.1.2</ecNumber>
    </alternativeName>
    <alternativeName>
        <fullName>IGP synthase subunit HisH</fullName>
    </alternativeName>
    <alternativeName>
        <fullName>ImGP synthase subunit HisH</fullName>
        <shortName>IGPS subunit HisH</shortName>
    </alternativeName>
</protein>
<gene>
    <name type="primary">hisH</name>
    <name type="ordered locus">BSU34890</name>
</gene>
<name>HIS5_BACSU</name>
<evidence type="ECO:0000250" key="1"/>
<proteinExistence type="inferred from homology"/>
<sequence>MIGVIDYGMGNLYSVSKALERVGVPYFVSEKPEELKEADAFILPGVGSFGDAMDNLGYTKLDQLIHDMVSEGRLLLGICLGMQLLFEESEENGTASGLGLLKGKAVRLKAEDEKGNKLKVPHMGWNRLSFHNESPLLTKTEQGYAYFVHSYYIDGMEENALLASADYGVRVPAVVGKRNVFGAQFHPEKSSTVGMSILTQFTKMAAEQKVKK</sequence>
<reference key="1">
    <citation type="submission" date="1997-08" db="EMBL/GenBank/DDBJ databases">
        <title>Nucleotide sequence of the 300-304 chromosomal segment of Bacillus subtilis.</title>
        <authorList>
            <person name="Lazarevic V."/>
            <person name="Soldo B."/>
            <person name="Rivolta C."/>
            <person name="Reynolds S."/>
            <person name="Mauel C."/>
            <person name="Karamata D."/>
        </authorList>
    </citation>
    <scope>NUCLEOTIDE SEQUENCE [GENOMIC DNA]</scope>
</reference>
<reference key="2">
    <citation type="journal article" date="1997" name="Nature">
        <title>The complete genome sequence of the Gram-positive bacterium Bacillus subtilis.</title>
        <authorList>
            <person name="Kunst F."/>
            <person name="Ogasawara N."/>
            <person name="Moszer I."/>
            <person name="Albertini A.M."/>
            <person name="Alloni G."/>
            <person name="Azevedo V."/>
            <person name="Bertero M.G."/>
            <person name="Bessieres P."/>
            <person name="Bolotin A."/>
            <person name="Borchert S."/>
            <person name="Borriss R."/>
            <person name="Boursier L."/>
            <person name="Brans A."/>
            <person name="Braun M."/>
            <person name="Brignell S.C."/>
            <person name="Bron S."/>
            <person name="Brouillet S."/>
            <person name="Bruschi C.V."/>
            <person name="Caldwell B."/>
            <person name="Capuano V."/>
            <person name="Carter N.M."/>
            <person name="Choi S.-K."/>
            <person name="Codani J.-J."/>
            <person name="Connerton I.F."/>
            <person name="Cummings N.J."/>
            <person name="Daniel R.A."/>
            <person name="Denizot F."/>
            <person name="Devine K.M."/>
            <person name="Duesterhoeft A."/>
            <person name="Ehrlich S.D."/>
            <person name="Emmerson P.T."/>
            <person name="Entian K.-D."/>
            <person name="Errington J."/>
            <person name="Fabret C."/>
            <person name="Ferrari E."/>
            <person name="Foulger D."/>
            <person name="Fritz C."/>
            <person name="Fujita M."/>
            <person name="Fujita Y."/>
            <person name="Fuma S."/>
            <person name="Galizzi A."/>
            <person name="Galleron N."/>
            <person name="Ghim S.-Y."/>
            <person name="Glaser P."/>
            <person name="Goffeau A."/>
            <person name="Golightly E.J."/>
            <person name="Grandi G."/>
            <person name="Guiseppi G."/>
            <person name="Guy B.J."/>
            <person name="Haga K."/>
            <person name="Haiech J."/>
            <person name="Harwood C.R."/>
            <person name="Henaut A."/>
            <person name="Hilbert H."/>
            <person name="Holsappel S."/>
            <person name="Hosono S."/>
            <person name="Hullo M.-F."/>
            <person name="Itaya M."/>
            <person name="Jones L.-M."/>
            <person name="Joris B."/>
            <person name="Karamata D."/>
            <person name="Kasahara Y."/>
            <person name="Klaerr-Blanchard M."/>
            <person name="Klein C."/>
            <person name="Kobayashi Y."/>
            <person name="Koetter P."/>
            <person name="Koningstein G."/>
            <person name="Krogh S."/>
            <person name="Kumano M."/>
            <person name="Kurita K."/>
            <person name="Lapidus A."/>
            <person name="Lardinois S."/>
            <person name="Lauber J."/>
            <person name="Lazarevic V."/>
            <person name="Lee S.-M."/>
            <person name="Levine A."/>
            <person name="Liu H."/>
            <person name="Masuda S."/>
            <person name="Mauel C."/>
            <person name="Medigue C."/>
            <person name="Medina N."/>
            <person name="Mellado R.P."/>
            <person name="Mizuno M."/>
            <person name="Moestl D."/>
            <person name="Nakai S."/>
            <person name="Noback M."/>
            <person name="Noone D."/>
            <person name="O'Reilly M."/>
            <person name="Ogawa K."/>
            <person name="Ogiwara A."/>
            <person name="Oudega B."/>
            <person name="Park S.-H."/>
            <person name="Parro V."/>
            <person name="Pohl T.M."/>
            <person name="Portetelle D."/>
            <person name="Porwollik S."/>
            <person name="Prescott A.M."/>
            <person name="Presecan E."/>
            <person name="Pujic P."/>
            <person name="Purnelle B."/>
            <person name="Rapoport G."/>
            <person name="Rey M."/>
            <person name="Reynolds S."/>
            <person name="Rieger M."/>
            <person name="Rivolta C."/>
            <person name="Rocha E."/>
            <person name="Roche B."/>
            <person name="Rose M."/>
            <person name="Sadaie Y."/>
            <person name="Sato T."/>
            <person name="Scanlan E."/>
            <person name="Schleich S."/>
            <person name="Schroeter R."/>
            <person name="Scoffone F."/>
            <person name="Sekiguchi J."/>
            <person name="Sekowska A."/>
            <person name="Seror S.J."/>
            <person name="Serror P."/>
            <person name="Shin B.-S."/>
            <person name="Soldo B."/>
            <person name="Sorokin A."/>
            <person name="Tacconi E."/>
            <person name="Takagi T."/>
            <person name="Takahashi H."/>
            <person name="Takemaru K."/>
            <person name="Takeuchi M."/>
            <person name="Tamakoshi A."/>
            <person name="Tanaka T."/>
            <person name="Terpstra P."/>
            <person name="Tognoni A."/>
            <person name="Tosato V."/>
            <person name="Uchiyama S."/>
            <person name="Vandenbol M."/>
            <person name="Vannier F."/>
            <person name="Vassarotti A."/>
            <person name="Viari A."/>
            <person name="Wambutt R."/>
            <person name="Wedler E."/>
            <person name="Wedler H."/>
            <person name="Weitzenegger T."/>
            <person name="Winters P."/>
            <person name="Wipat A."/>
            <person name="Yamamoto H."/>
            <person name="Yamane K."/>
            <person name="Yasumoto K."/>
            <person name="Yata K."/>
            <person name="Yoshida K."/>
            <person name="Yoshikawa H.-F."/>
            <person name="Zumstein E."/>
            <person name="Yoshikawa H."/>
            <person name="Danchin A."/>
        </authorList>
    </citation>
    <scope>NUCLEOTIDE SEQUENCE [LARGE SCALE GENOMIC DNA]</scope>
    <source>
        <strain>168</strain>
    </source>
</reference>
<organism>
    <name type="scientific">Bacillus subtilis (strain 168)</name>
    <dbReference type="NCBI Taxonomy" id="224308"/>
    <lineage>
        <taxon>Bacteria</taxon>
        <taxon>Bacillati</taxon>
        <taxon>Bacillota</taxon>
        <taxon>Bacilli</taxon>
        <taxon>Bacillales</taxon>
        <taxon>Bacillaceae</taxon>
        <taxon>Bacillus</taxon>
    </lineage>
</organism>
<accession>O34565</accession>
<feature type="chain" id="PRO_0000152344" description="Imidazole glycerol phosphate synthase subunit HisH">
    <location>
        <begin position="1"/>
        <end position="212"/>
    </location>
</feature>
<feature type="domain" description="Glutamine amidotransferase type-1">
    <location>
        <begin position="1"/>
        <end position="211"/>
    </location>
</feature>
<feature type="active site" description="Nucleophile" evidence="1">
    <location>
        <position position="79"/>
    </location>
</feature>
<feature type="active site" evidence="1">
    <location>
        <position position="186"/>
    </location>
</feature>
<feature type="active site" evidence="1">
    <location>
        <position position="188"/>
    </location>
</feature>
<comment type="function">
    <text evidence="1">IGPS catalyzes the conversion of PRFAR and glutamine to IGP, AICAR and glutamate. The HisH subunit catalyzes the hydrolysis of glutamine to glutamate and ammonia as part of the synthesis of IGP and AICAR. The resulting ammonia molecule is channeled to the active site of HisF (By similarity).</text>
</comment>
<comment type="catalytic activity">
    <reaction>
        <text>5-[(5-phospho-1-deoxy-D-ribulos-1-ylimino)methylamino]-1-(5-phospho-beta-D-ribosyl)imidazole-4-carboxamide + L-glutamine = D-erythro-1-(imidazol-4-yl)glycerol 3-phosphate + 5-amino-1-(5-phospho-beta-D-ribosyl)imidazole-4-carboxamide + L-glutamate + H(+)</text>
        <dbReference type="Rhea" id="RHEA:24793"/>
        <dbReference type="ChEBI" id="CHEBI:15378"/>
        <dbReference type="ChEBI" id="CHEBI:29985"/>
        <dbReference type="ChEBI" id="CHEBI:58278"/>
        <dbReference type="ChEBI" id="CHEBI:58359"/>
        <dbReference type="ChEBI" id="CHEBI:58475"/>
        <dbReference type="ChEBI" id="CHEBI:58525"/>
        <dbReference type="EC" id="4.3.2.10"/>
    </reaction>
</comment>
<comment type="catalytic activity">
    <reaction>
        <text>L-glutamine + H2O = L-glutamate + NH4(+)</text>
        <dbReference type="Rhea" id="RHEA:15889"/>
        <dbReference type="ChEBI" id="CHEBI:15377"/>
        <dbReference type="ChEBI" id="CHEBI:28938"/>
        <dbReference type="ChEBI" id="CHEBI:29985"/>
        <dbReference type="ChEBI" id="CHEBI:58359"/>
        <dbReference type="EC" id="3.5.1.2"/>
    </reaction>
</comment>
<comment type="pathway">
    <text>Amino-acid biosynthesis; L-histidine biosynthesis; L-histidine from 5-phospho-alpha-D-ribose 1-diphosphate: step 5/9.</text>
</comment>
<comment type="subunit">
    <text evidence="1">Heterodimer of HisH and HisF.</text>
</comment>
<comment type="subcellular location">
    <subcellularLocation>
        <location evidence="1">Cytoplasm</location>
    </subcellularLocation>
</comment>
<dbReference type="EC" id="4.3.2.10"/>
<dbReference type="EC" id="3.5.1.2"/>
<dbReference type="EMBL" id="AF017113">
    <property type="protein sequence ID" value="AAC67297.1"/>
    <property type="molecule type" value="Genomic_DNA"/>
</dbReference>
<dbReference type="EMBL" id="AL009126">
    <property type="protein sequence ID" value="CAB15494.1"/>
    <property type="molecule type" value="Genomic_DNA"/>
</dbReference>
<dbReference type="PIR" id="D69641">
    <property type="entry name" value="D69641"/>
</dbReference>
<dbReference type="RefSeq" id="NP_391369.1">
    <property type="nucleotide sequence ID" value="NC_000964.3"/>
</dbReference>
<dbReference type="RefSeq" id="WP_003244267.1">
    <property type="nucleotide sequence ID" value="NZ_OZ025638.1"/>
</dbReference>
<dbReference type="SMR" id="O34565"/>
<dbReference type="FunCoup" id="O34565">
    <property type="interactions" value="470"/>
</dbReference>
<dbReference type="STRING" id="224308.BSU34890"/>
<dbReference type="PaxDb" id="224308-BSU34890"/>
<dbReference type="EnsemblBacteria" id="CAB15494">
    <property type="protein sequence ID" value="CAB15494"/>
    <property type="gene ID" value="BSU_34890"/>
</dbReference>
<dbReference type="GeneID" id="936590"/>
<dbReference type="KEGG" id="bsu:BSU34890"/>
<dbReference type="PATRIC" id="fig|224308.179.peg.3777"/>
<dbReference type="eggNOG" id="COG0118">
    <property type="taxonomic scope" value="Bacteria"/>
</dbReference>
<dbReference type="InParanoid" id="O34565"/>
<dbReference type="OrthoDB" id="9807137at2"/>
<dbReference type="PhylomeDB" id="O34565"/>
<dbReference type="BioCyc" id="BSUB:BSU34890-MONOMER"/>
<dbReference type="UniPathway" id="UPA00031">
    <property type="reaction ID" value="UER00010"/>
</dbReference>
<dbReference type="Proteomes" id="UP000001570">
    <property type="component" value="Chromosome"/>
</dbReference>
<dbReference type="GO" id="GO:0005737">
    <property type="term" value="C:cytoplasm"/>
    <property type="evidence" value="ECO:0007669"/>
    <property type="project" value="UniProtKB-SubCell"/>
</dbReference>
<dbReference type="GO" id="GO:0004359">
    <property type="term" value="F:glutaminase activity"/>
    <property type="evidence" value="ECO:0007669"/>
    <property type="project" value="UniProtKB-EC"/>
</dbReference>
<dbReference type="GO" id="GO:0000107">
    <property type="term" value="F:imidazoleglycerol-phosphate synthase activity"/>
    <property type="evidence" value="ECO:0000318"/>
    <property type="project" value="GO_Central"/>
</dbReference>
<dbReference type="GO" id="GO:0016829">
    <property type="term" value="F:lyase activity"/>
    <property type="evidence" value="ECO:0007669"/>
    <property type="project" value="UniProtKB-KW"/>
</dbReference>
<dbReference type="GO" id="GO:0000105">
    <property type="term" value="P:L-histidine biosynthetic process"/>
    <property type="evidence" value="ECO:0007669"/>
    <property type="project" value="UniProtKB-UniRule"/>
</dbReference>
<dbReference type="CDD" id="cd01748">
    <property type="entry name" value="GATase1_IGP_Synthase"/>
    <property type="match status" value="1"/>
</dbReference>
<dbReference type="Gene3D" id="3.40.50.880">
    <property type="match status" value="1"/>
</dbReference>
<dbReference type="HAMAP" id="MF_00278">
    <property type="entry name" value="HisH"/>
    <property type="match status" value="1"/>
</dbReference>
<dbReference type="InterPro" id="IPR029062">
    <property type="entry name" value="Class_I_gatase-like"/>
</dbReference>
<dbReference type="InterPro" id="IPR017926">
    <property type="entry name" value="GATASE"/>
</dbReference>
<dbReference type="InterPro" id="IPR010139">
    <property type="entry name" value="Imidazole-glycPsynth_HisH"/>
</dbReference>
<dbReference type="NCBIfam" id="TIGR01855">
    <property type="entry name" value="IMP_synth_hisH"/>
    <property type="match status" value="1"/>
</dbReference>
<dbReference type="PANTHER" id="PTHR42701">
    <property type="entry name" value="IMIDAZOLE GLYCEROL PHOSPHATE SYNTHASE SUBUNIT HISH"/>
    <property type="match status" value="1"/>
</dbReference>
<dbReference type="PANTHER" id="PTHR42701:SF1">
    <property type="entry name" value="IMIDAZOLE GLYCEROL PHOSPHATE SYNTHASE SUBUNIT HISH"/>
    <property type="match status" value="1"/>
</dbReference>
<dbReference type="Pfam" id="PF00117">
    <property type="entry name" value="GATase"/>
    <property type="match status" value="1"/>
</dbReference>
<dbReference type="PIRSF" id="PIRSF000495">
    <property type="entry name" value="Amidotransf_hisH"/>
    <property type="match status" value="1"/>
</dbReference>
<dbReference type="SUPFAM" id="SSF52317">
    <property type="entry name" value="Class I glutamine amidotransferase-like"/>
    <property type="match status" value="1"/>
</dbReference>
<dbReference type="PROSITE" id="PS51273">
    <property type="entry name" value="GATASE_TYPE_1"/>
    <property type="match status" value="1"/>
</dbReference>
<keyword id="KW-0028">Amino-acid biosynthesis</keyword>
<keyword id="KW-0963">Cytoplasm</keyword>
<keyword id="KW-0315">Glutamine amidotransferase</keyword>
<keyword id="KW-0368">Histidine biosynthesis</keyword>
<keyword id="KW-0378">Hydrolase</keyword>
<keyword id="KW-0456">Lyase</keyword>
<keyword id="KW-1185">Reference proteome</keyword>